<protein>
    <recommendedName>
        <fullName>Cytochrome b</fullName>
    </recommendedName>
    <alternativeName>
        <fullName>Complex III subunit 3</fullName>
    </alternativeName>
    <alternativeName>
        <fullName>Complex III subunit III</fullName>
    </alternativeName>
    <alternativeName>
        <fullName>Cytochrome b-c1 complex subunit 3</fullName>
    </alternativeName>
    <alternativeName>
        <fullName>Ubiquinol-cytochrome-c reductase complex cytochrome b subunit</fullName>
    </alternativeName>
</protein>
<geneLocation type="mitochondrion"/>
<evidence type="ECO:0000250" key="1"/>
<evidence type="ECO:0000250" key="2">
    <source>
        <dbReference type="UniProtKB" id="P00157"/>
    </source>
</evidence>
<evidence type="ECO:0000255" key="3">
    <source>
        <dbReference type="PROSITE-ProRule" id="PRU00967"/>
    </source>
</evidence>
<evidence type="ECO:0000255" key="4">
    <source>
        <dbReference type="PROSITE-ProRule" id="PRU00968"/>
    </source>
</evidence>
<sequence length="379" mass="42686">MTNIRKSHPLIKIINESFIDLPAPSNISAWWNFGSLLGACLILQILTGLFVAMHYTSDTTTAFSSVTHICRDVNYGWIIRYMHANGASMFFICLFMHIGRGMYYGSYSFMETWNIGIILLFTVMATAFMGYVLPWGQMSFWGATVITNLLSAVPYIGTNLVEWIWGGFSVDKATLTRFFAFHFILPFVISALAAVHLLFLHETGSNNPSGIPSDSDKIPFHPYYTIKDMLGLLIMFTALMTLVLFSPDLLGDPDNYTPANPLNTPPHIKPEWYFLFAYAILRSIPYKLGGVLALILSITILAIVPLLHTSNQRSMMFRPLSQCLFWLLAADLLTLTWIGGQPVEYPFIIIGQLASILYFLIILVLMPISGIIENHLLKW</sequence>
<name>CYB_MUNMN</name>
<proteinExistence type="inferred from homology"/>
<comment type="function">
    <text evidence="2">Component of the ubiquinol-cytochrome c reductase complex (complex III or cytochrome b-c1 complex) that is part of the mitochondrial respiratory chain. The b-c1 complex mediates electron transfer from ubiquinol to cytochrome c. Contributes to the generation of a proton gradient across the mitochondrial membrane that is then used for ATP synthesis.</text>
</comment>
<comment type="cofactor">
    <cofactor evidence="2">
        <name>heme b</name>
        <dbReference type="ChEBI" id="CHEBI:60344"/>
    </cofactor>
    <text evidence="2">Binds 2 heme b groups non-covalently.</text>
</comment>
<comment type="subunit">
    <text evidence="2">The cytochrome bc1 complex contains 11 subunits: 3 respiratory subunits (MT-CYB, CYC1 and UQCRFS1), 2 core proteins (UQCRC1 and UQCRC2) and 6 low-molecular weight proteins (UQCRH/QCR6, UQCRB/QCR7, UQCRQ/QCR8, UQCR10/QCR9, UQCR11/QCR10 and a cleavage product of UQCRFS1). This cytochrome bc1 complex then forms a dimer.</text>
</comment>
<comment type="subcellular location">
    <subcellularLocation>
        <location evidence="2">Mitochondrion inner membrane</location>
        <topology evidence="2">Multi-pass membrane protein</topology>
    </subcellularLocation>
</comment>
<comment type="miscellaneous">
    <text evidence="1">Heme 1 (or BL or b562) is low-potential and absorbs at about 562 nm, and heme 2 (or BH or b566) is high-potential and absorbs at about 566 nm.</text>
</comment>
<comment type="similarity">
    <text evidence="3 4">Belongs to the cytochrome b family.</text>
</comment>
<comment type="caution">
    <text evidence="2">The full-length protein contains only eight transmembrane helices, not nine as predicted by bioinformatics tools.</text>
</comment>
<gene>
    <name type="primary">MT-CYB</name>
    <name type="synonym">COB</name>
    <name type="synonym">CYTB</name>
    <name type="synonym">MTCYB</name>
</gene>
<feature type="chain" id="PRO_0000247428" description="Cytochrome b">
    <location>
        <begin position="1"/>
        <end position="379"/>
    </location>
</feature>
<feature type="transmembrane region" description="Helical" evidence="2">
    <location>
        <begin position="33"/>
        <end position="53"/>
    </location>
</feature>
<feature type="transmembrane region" description="Helical" evidence="2">
    <location>
        <begin position="77"/>
        <end position="98"/>
    </location>
</feature>
<feature type="transmembrane region" description="Helical" evidence="2">
    <location>
        <begin position="113"/>
        <end position="133"/>
    </location>
</feature>
<feature type="transmembrane region" description="Helical" evidence="2">
    <location>
        <begin position="178"/>
        <end position="198"/>
    </location>
</feature>
<feature type="transmembrane region" description="Helical" evidence="2">
    <location>
        <begin position="226"/>
        <end position="246"/>
    </location>
</feature>
<feature type="transmembrane region" description="Helical" evidence="2">
    <location>
        <begin position="288"/>
        <end position="308"/>
    </location>
</feature>
<feature type="transmembrane region" description="Helical" evidence="2">
    <location>
        <begin position="320"/>
        <end position="340"/>
    </location>
</feature>
<feature type="transmembrane region" description="Helical" evidence="2">
    <location>
        <begin position="347"/>
        <end position="367"/>
    </location>
</feature>
<feature type="binding site" description="axial binding residue" evidence="2">
    <location>
        <position position="83"/>
    </location>
    <ligand>
        <name>heme b</name>
        <dbReference type="ChEBI" id="CHEBI:60344"/>
        <label>b562</label>
    </ligand>
    <ligandPart>
        <name>Fe</name>
        <dbReference type="ChEBI" id="CHEBI:18248"/>
    </ligandPart>
</feature>
<feature type="binding site" description="axial binding residue" evidence="2">
    <location>
        <position position="97"/>
    </location>
    <ligand>
        <name>heme b</name>
        <dbReference type="ChEBI" id="CHEBI:60344"/>
        <label>b566</label>
    </ligand>
    <ligandPart>
        <name>Fe</name>
        <dbReference type="ChEBI" id="CHEBI:18248"/>
    </ligandPart>
</feature>
<feature type="binding site" description="axial binding residue" evidence="2">
    <location>
        <position position="182"/>
    </location>
    <ligand>
        <name>heme b</name>
        <dbReference type="ChEBI" id="CHEBI:60344"/>
        <label>b562</label>
    </ligand>
    <ligandPart>
        <name>Fe</name>
        <dbReference type="ChEBI" id="CHEBI:18248"/>
    </ligandPart>
</feature>
<feature type="binding site" description="axial binding residue" evidence="2">
    <location>
        <position position="196"/>
    </location>
    <ligand>
        <name>heme b</name>
        <dbReference type="ChEBI" id="CHEBI:60344"/>
        <label>b566</label>
    </ligand>
    <ligandPart>
        <name>Fe</name>
        <dbReference type="ChEBI" id="CHEBI:18248"/>
    </ligandPart>
</feature>
<feature type="binding site" evidence="2">
    <location>
        <position position="201"/>
    </location>
    <ligand>
        <name>a ubiquinone</name>
        <dbReference type="ChEBI" id="CHEBI:16389"/>
    </ligand>
</feature>
<reference key="1">
    <citation type="journal article" date="2004" name="Mol. Phylogenet. Evol.">
        <title>Molecular systematics and origin of sociality in mongooses (Herpestidae, Carnivora).</title>
        <authorList>
            <person name="Veron G."/>
            <person name="Colyn M."/>
            <person name="Dunham A.E."/>
            <person name="Taylor P."/>
            <person name="Gaubert P."/>
        </authorList>
    </citation>
    <scope>NUCLEOTIDE SEQUENCE [GENOMIC DNA]</scope>
</reference>
<keyword id="KW-0249">Electron transport</keyword>
<keyword id="KW-0349">Heme</keyword>
<keyword id="KW-0408">Iron</keyword>
<keyword id="KW-0472">Membrane</keyword>
<keyword id="KW-0479">Metal-binding</keyword>
<keyword id="KW-0496">Mitochondrion</keyword>
<keyword id="KW-0999">Mitochondrion inner membrane</keyword>
<keyword id="KW-0679">Respiratory chain</keyword>
<keyword id="KW-0812">Transmembrane</keyword>
<keyword id="KW-1133">Transmembrane helix</keyword>
<keyword id="KW-0813">Transport</keyword>
<keyword id="KW-0830">Ubiquinone</keyword>
<dbReference type="EMBL" id="AF522347">
    <property type="protein sequence ID" value="AAQ08851.1"/>
    <property type="molecule type" value="Genomic_DNA"/>
</dbReference>
<dbReference type="SMR" id="Q71E89"/>
<dbReference type="GO" id="GO:0005743">
    <property type="term" value="C:mitochondrial inner membrane"/>
    <property type="evidence" value="ECO:0007669"/>
    <property type="project" value="UniProtKB-SubCell"/>
</dbReference>
<dbReference type="GO" id="GO:0045275">
    <property type="term" value="C:respiratory chain complex III"/>
    <property type="evidence" value="ECO:0007669"/>
    <property type="project" value="InterPro"/>
</dbReference>
<dbReference type="GO" id="GO:0046872">
    <property type="term" value="F:metal ion binding"/>
    <property type="evidence" value="ECO:0007669"/>
    <property type="project" value="UniProtKB-KW"/>
</dbReference>
<dbReference type="GO" id="GO:0008121">
    <property type="term" value="F:ubiquinol-cytochrome-c reductase activity"/>
    <property type="evidence" value="ECO:0007669"/>
    <property type="project" value="InterPro"/>
</dbReference>
<dbReference type="GO" id="GO:0006122">
    <property type="term" value="P:mitochondrial electron transport, ubiquinol to cytochrome c"/>
    <property type="evidence" value="ECO:0007669"/>
    <property type="project" value="TreeGrafter"/>
</dbReference>
<dbReference type="CDD" id="cd00290">
    <property type="entry name" value="cytochrome_b_C"/>
    <property type="match status" value="1"/>
</dbReference>
<dbReference type="CDD" id="cd00284">
    <property type="entry name" value="Cytochrome_b_N"/>
    <property type="match status" value="1"/>
</dbReference>
<dbReference type="FunFam" id="1.20.810.10:FF:000002">
    <property type="entry name" value="Cytochrome b"/>
    <property type="match status" value="1"/>
</dbReference>
<dbReference type="Gene3D" id="1.20.810.10">
    <property type="entry name" value="Cytochrome Bc1 Complex, Chain C"/>
    <property type="match status" value="1"/>
</dbReference>
<dbReference type="InterPro" id="IPR005798">
    <property type="entry name" value="Cyt_b/b6_C"/>
</dbReference>
<dbReference type="InterPro" id="IPR036150">
    <property type="entry name" value="Cyt_b/b6_C_sf"/>
</dbReference>
<dbReference type="InterPro" id="IPR005797">
    <property type="entry name" value="Cyt_b/b6_N"/>
</dbReference>
<dbReference type="InterPro" id="IPR027387">
    <property type="entry name" value="Cytb/b6-like_sf"/>
</dbReference>
<dbReference type="InterPro" id="IPR030689">
    <property type="entry name" value="Cytochrome_b"/>
</dbReference>
<dbReference type="InterPro" id="IPR048260">
    <property type="entry name" value="Cytochrome_b_C_euk/bac"/>
</dbReference>
<dbReference type="InterPro" id="IPR048259">
    <property type="entry name" value="Cytochrome_b_N_euk/bac"/>
</dbReference>
<dbReference type="InterPro" id="IPR016174">
    <property type="entry name" value="Di-haem_cyt_TM"/>
</dbReference>
<dbReference type="PANTHER" id="PTHR19271">
    <property type="entry name" value="CYTOCHROME B"/>
    <property type="match status" value="1"/>
</dbReference>
<dbReference type="PANTHER" id="PTHR19271:SF16">
    <property type="entry name" value="CYTOCHROME B"/>
    <property type="match status" value="1"/>
</dbReference>
<dbReference type="Pfam" id="PF00032">
    <property type="entry name" value="Cytochrom_B_C"/>
    <property type="match status" value="1"/>
</dbReference>
<dbReference type="Pfam" id="PF00033">
    <property type="entry name" value="Cytochrome_B"/>
    <property type="match status" value="1"/>
</dbReference>
<dbReference type="PIRSF" id="PIRSF038885">
    <property type="entry name" value="COB"/>
    <property type="match status" value="1"/>
</dbReference>
<dbReference type="SUPFAM" id="SSF81648">
    <property type="entry name" value="a domain/subunit of cytochrome bc1 complex (Ubiquinol-cytochrome c reductase)"/>
    <property type="match status" value="1"/>
</dbReference>
<dbReference type="SUPFAM" id="SSF81342">
    <property type="entry name" value="Transmembrane di-heme cytochromes"/>
    <property type="match status" value="1"/>
</dbReference>
<dbReference type="PROSITE" id="PS51003">
    <property type="entry name" value="CYTB_CTER"/>
    <property type="match status" value="1"/>
</dbReference>
<dbReference type="PROSITE" id="PS51002">
    <property type="entry name" value="CYTB_NTER"/>
    <property type="match status" value="1"/>
</dbReference>
<organism>
    <name type="scientific">Mungos mungo</name>
    <name type="common">Banded mongoose</name>
    <dbReference type="NCBI Taxonomy" id="210652"/>
    <lineage>
        <taxon>Eukaryota</taxon>
        <taxon>Metazoa</taxon>
        <taxon>Chordata</taxon>
        <taxon>Craniata</taxon>
        <taxon>Vertebrata</taxon>
        <taxon>Euteleostomi</taxon>
        <taxon>Mammalia</taxon>
        <taxon>Eutheria</taxon>
        <taxon>Laurasiatheria</taxon>
        <taxon>Carnivora</taxon>
        <taxon>Feliformia</taxon>
        <taxon>Herpestidae</taxon>
        <taxon>Mungos</taxon>
    </lineage>
</organism>
<accession>Q71E89</accession>